<dbReference type="EMBL" id="AJ235270">
    <property type="protein sequence ID" value="CAA14651.1"/>
    <property type="molecule type" value="Genomic_DNA"/>
</dbReference>
<dbReference type="PIR" id="D71729">
    <property type="entry name" value="D71729"/>
</dbReference>
<dbReference type="RefSeq" id="NP_220574.1">
    <property type="nucleotide sequence ID" value="NC_000963.1"/>
</dbReference>
<dbReference type="RefSeq" id="WP_004595925.1">
    <property type="nucleotide sequence ID" value="NC_000963.1"/>
</dbReference>
<dbReference type="SMR" id="Q9ZDX9"/>
<dbReference type="STRING" id="272947.gene:17555267"/>
<dbReference type="EnsemblBacteria" id="CAA14651">
    <property type="protein sequence ID" value="CAA14651"/>
    <property type="gene ID" value="CAA14651"/>
</dbReference>
<dbReference type="GeneID" id="57569313"/>
<dbReference type="KEGG" id="rpr:RP185"/>
<dbReference type="PATRIC" id="fig|272947.5.peg.192"/>
<dbReference type="eggNOG" id="COG0443">
    <property type="taxonomic scope" value="Bacteria"/>
</dbReference>
<dbReference type="HOGENOM" id="CLU_005965_2_1_5"/>
<dbReference type="OrthoDB" id="9766019at2"/>
<dbReference type="Proteomes" id="UP000002480">
    <property type="component" value="Chromosome"/>
</dbReference>
<dbReference type="GO" id="GO:0005524">
    <property type="term" value="F:ATP binding"/>
    <property type="evidence" value="ECO:0007669"/>
    <property type="project" value="UniProtKB-UniRule"/>
</dbReference>
<dbReference type="GO" id="GO:0140662">
    <property type="term" value="F:ATP-dependent protein folding chaperone"/>
    <property type="evidence" value="ECO:0007669"/>
    <property type="project" value="InterPro"/>
</dbReference>
<dbReference type="GO" id="GO:0051082">
    <property type="term" value="F:unfolded protein binding"/>
    <property type="evidence" value="ECO:0007669"/>
    <property type="project" value="InterPro"/>
</dbReference>
<dbReference type="CDD" id="cd11733">
    <property type="entry name" value="ASKHA_NBD_HSP70_HSPA9"/>
    <property type="match status" value="1"/>
</dbReference>
<dbReference type="FunFam" id="2.60.34.10:FF:000014">
    <property type="entry name" value="Chaperone protein DnaK HSP70"/>
    <property type="match status" value="1"/>
</dbReference>
<dbReference type="FunFam" id="3.30.420.40:FF:000020">
    <property type="entry name" value="Chaperone protein HscA homolog"/>
    <property type="match status" value="1"/>
</dbReference>
<dbReference type="FunFam" id="3.30.30.30:FF:000003">
    <property type="entry name" value="Heat shock protein 9"/>
    <property type="match status" value="1"/>
</dbReference>
<dbReference type="FunFam" id="1.20.1270.10:FF:000001">
    <property type="entry name" value="Molecular chaperone DnaK"/>
    <property type="match status" value="1"/>
</dbReference>
<dbReference type="FunFam" id="3.30.420.40:FF:000004">
    <property type="entry name" value="Molecular chaperone DnaK"/>
    <property type="match status" value="1"/>
</dbReference>
<dbReference type="FunFam" id="3.90.640.10:FF:000003">
    <property type="entry name" value="Molecular chaperone DnaK"/>
    <property type="match status" value="1"/>
</dbReference>
<dbReference type="Gene3D" id="1.20.1270.10">
    <property type="match status" value="1"/>
</dbReference>
<dbReference type="Gene3D" id="3.30.420.40">
    <property type="match status" value="2"/>
</dbReference>
<dbReference type="Gene3D" id="3.90.640.10">
    <property type="entry name" value="Actin, Chain A, domain 4"/>
    <property type="match status" value="1"/>
</dbReference>
<dbReference type="Gene3D" id="2.60.34.10">
    <property type="entry name" value="Substrate Binding Domain Of DNAk, Chain A, domain 1"/>
    <property type="match status" value="1"/>
</dbReference>
<dbReference type="HAMAP" id="MF_00332">
    <property type="entry name" value="DnaK"/>
    <property type="match status" value="1"/>
</dbReference>
<dbReference type="InterPro" id="IPR043129">
    <property type="entry name" value="ATPase_NBD"/>
</dbReference>
<dbReference type="InterPro" id="IPR012725">
    <property type="entry name" value="Chaperone_DnaK"/>
</dbReference>
<dbReference type="InterPro" id="IPR018181">
    <property type="entry name" value="Heat_shock_70_CS"/>
</dbReference>
<dbReference type="InterPro" id="IPR029048">
    <property type="entry name" value="HSP70_C_sf"/>
</dbReference>
<dbReference type="InterPro" id="IPR029047">
    <property type="entry name" value="HSP70_peptide-bd_sf"/>
</dbReference>
<dbReference type="InterPro" id="IPR013126">
    <property type="entry name" value="Hsp_70_fam"/>
</dbReference>
<dbReference type="NCBIfam" id="NF001413">
    <property type="entry name" value="PRK00290.1"/>
    <property type="match status" value="1"/>
</dbReference>
<dbReference type="NCBIfam" id="NF003520">
    <property type="entry name" value="PRK05183.1"/>
    <property type="match status" value="1"/>
</dbReference>
<dbReference type="NCBIfam" id="TIGR02350">
    <property type="entry name" value="prok_dnaK"/>
    <property type="match status" value="1"/>
</dbReference>
<dbReference type="PANTHER" id="PTHR19375">
    <property type="entry name" value="HEAT SHOCK PROTEIN 70KDA"/>
    <property type="match status" value="1"/>
</dbReference>
<dbReference type="Pfam" id="PF00012">
    <property type="entry name" value="HSP70"/>
    <property type="match status" value="1"/>
</dbReference>
<dbReference type="PRINTS" id="PR00301">
    <property type="entry name" value="HEATSHOCK70"/>
</dbReference>
<dbReference type="SUPFAM" id="SSF53067">
    <property type="entry name" value="Actin-like ATPase domain"/>
    <property type="match status" value="2"/>
</dbReference>
<dbReference type="SUPFAM" id="SSF100934">
    <property type="entry name" value="Heat shock protein 70kD (HSP70), C-terminal subdomain"/>
    <property type="match status" value="1"/>
</dbReference>
<dbReference type="SUPFAM" id="SSF100920">
    <property type="entry name" value="Heat shock protein 70kD (HSP70), peptide-binding domain"/>
    <property type="match status" value="1"/>
</dbReference>
<dbReference type="PROSITE" id="PS00297">
    <property type="entry name" value="HSP70_1"/>
    <property type="match status" value="1"/>
</dbReference>
<dbReference type="PROSITE" id="PS00329">
    <property type="entry name" value="HSP70_2"/>
    <property type="match status" value="1"/>
</dbReference>
<dbReference type="PROSITE" id="PS01036">
    <property type="entry name" value="HSP70_3"/>
    <property type="match status" value="1"/>
</dbReference>
<organism>
    <name type="scientific">Rickettsia prowazekii (strain Madrid E)</name>
    <dbReference type="NCBI Taxonomy" id="272947"/>
    <lineage>
        <taxon>Bacteria</taxon>
        <taxon>Pseudomonadati</taxon>
        <taxon>Pseudomonadota</taxon>
        <taxon>Alphaproteobacteria</taxon>
        <taxon>Rickettsiales</taxon>
        <taxon>Rickettsiaceae</taxon>
        <taxon>Rickettsieae</taxon>
        <taxon>Rickettsia</taxon>
        <taxon>typhus group</taxon>
    </lineage>
</organism>
<sequence>MGKVIGIDLGTTNSCVAVMEGKEPKVIDNAEGERTTPSIIAFANSERLVGQPAKRQAVTNPRNTIYAVKRLIGRNFTDPMVRKDQGLVPYNIVKADNGDAWVEADNHKYSPSQISAFILQKMKETAENYLGEKVTQAVITVPAYFNDAQRQATKDAGKIAGLEVLRIINEPTAAALAYGFEKSSSKTIAVYDLGGGTFDVSILEISDGVFEVKSTNGDTFLGGEDFDTRILNHLIEVFKKESGIDLSKDPLALQRLKEAAEKAKKELSSTSTTDINLPYITADSTGPKHLNIKFTRAELEKLVDDLIEKTIEPCRQALKDAGFKPNDIQEVVLVGGMTRMPKVQEAVKKFFGREPHKGVNPDEVVALGAAIQGGVLNKEVTDILLLDVTPLSLGIETLGGVFTRLIDRNTTIPSKKSQVFSTADDNQHAVTIRVFQGEREMAKDNKLLGQFNLEGIPPAPRGVPQIEVTFDIDANGIVHVSAKDKASGKEQKVTIQASGGLSDAEIEQMVKDAEHNADEDKKRKELIETKNAADSLVYSTEKTLREYGDKLSSEEKGTVEEALTSLKAALESEDASLIKEKTGNLTAANMKIGEAMYKTQTENQHSEANTVNNEKVVDADFQDVDKK</sequence>
<protein>
    <recommendedName>
        <fullName>Chaperone protein DnaK</fullName>
    </recommendedName>
    <alternativeName>
        <fullName>HSP70</fullName>
    </alternativeName>
    <alternativeName>
        <fullName>Heat shock 70 kDa protein</fullName>
    </alternativeName>
    <alternativeName>
        <fullName>Heat shock protein 70</fullName>
    </alternativeName>
</protein>
<accession>Q9ZDX9</accession>
<comment type="function">
    <text evidence="1">Acts as a chaperone.</text>
</comment>
<comment type="induction">
    <text evidence="1">By stress conditions e.g. heat shock (By similarity).</text>
</comment>
<comment type="similarity">
    <text evidence="2">Belongs to the heat shock protein 70 family.</text>
</comment>
<gene>
    <name type="primary">dnaK</name>
    <name type="ordered locus">RP185</name>
</gene>
<name>DNAK_RICPR</name>
<keyword id="KW-0067">ATP-binding</keyword>
<keyword id="KW-0143">Chaperone</keyword>
<keyword id="KW-0547">Nucleotide-binding</keyword>
<keyword id="KW-0597">Phosphoprotein</keyword>
<keyword id="KW-1185">Reference proteome</keyword>
<keyword id="KW-0346">Stress response</keyword>
<proteinExistence type="inferred from homology"/>
<reference key="1">
    <citation type="journal article" date="1998" name="Nature">
        <title>The genome sequence of Rickettsia prowazekii and the origin of mitochondria.</title>
        <authorList>
            <person name="Andersson S.G.E."/>
            <person name="Zomorodipour A."/>
            <person name="Andersson J.O."/>
            <person name="Sicheritz-Ponten T."/>
            <person name="Alsmark U.C.M."/>
            <person name="Podowski R.M."/>
            <person name="Naeslund A.K."/>
            <person name="Eriksson A.-S."/>
            <person name="Winkler H.H."/>
            <person name="Kurland C.G."/>
        </authorList>
    </citation>
    <scope>NUCLEOTIDE SEQUENCE [LARGE SCALE GENOMIC DNA]</scope>
    <source>
        <strain>Madrid E</strain>
    </source>
</reference>
<feature type="chain" id="PRO_0000078530" description="Chaperone protein DnaK">
    <location>
        <begin position="1"/>
        <end position="627"/>
    </location>
</feature>
<feature type="modified residue" description="Phosphothreonine; by autocatalysis" evidence="1">
    <location>
        <position position="197"/>
    </location>
</feature>
<evidence type="ECO:0000250" key="1"/>
<evidence type="ECO:0000305" key="2"/>